<protein>
    <recommendedName>
        <fullName>Gap junction alpha-1 protein</fullName>
    </recommendedName>
    <alternativeName>
        <fullName>Connexin-43</fullName>
        <shortName>Cx43</shortName>
    </alternativeName>
</protein>
<feature type="initiator methionine" description="Removed" evidence="1">
    <location>
        <position position="1"/>
    </location>
</feature>
<feature type="chain" id="PRO_0000312998" description="Gap junction alpha-1 protein">
    <location>
        <begin position="2"/>
        <end position="382"/>
    </location>
</feature>
<feature type="topological domain" description="Cytoplasmic" evidence="1">
    <location>
        <begin position="2"/>
        <end position="23"/>
    </location>
</feature>
<feature type="transmembrane region" description="Helical" evidence="5">
    <location>
        <begin position="24"/>
        <end position="44"/>
    </location>
</feature>
<feature type="topological domain" description="Extracellular" evidence="1">
    <location>
        <begin position="45"/>
        <end position="76"/>
    </location>
</feature>
<feature type="transmembrane region" description="Helical" evidence="5">
    <location>
        <begin position="77"/>
        <end position="97"/>
    </location>
</feature>
<feature type="topological domain" description="Cytoplasmic" evidence="1">
    <location>
        <begin position="98"/>
        <end position="155"/>
    </location>
</feature>
<feature type="transmembrane region" description="Helical" evidence="5">
    <location>
        <begin position="156"/>
        <end position="176"/>
    </location>
</feature>
<feature type="topological domain" description="Extracellular" evidence="1">
    <location>
        <begin position="177"/>
        <end position="207"/>
    </location>
</feature>
<feature type="transmembrane region" description="Helical" evidence="5">
    <location>
        <begin position="208"/>
        <end position="228"/>
    </location>
</feature>
<feature type="topological domain" description="Cytoplasmic" evidence="1">
    <location>
        <begin position="229"/>
        <end position="382"/>
    </location>
</feature>
<feature type="region of interest" description="Interaction with NOV" evidence="1">
    <location>
        <begin position="244"/>
        <end position="382"/>
    </location>
</feature>
<feature type="region of interest" description="Interaction with UBQLN4" evidence="3">
    <location>
        <begin position="264"/>
        <end position="382"/>
    </location>
</feature>
<feature type="region of interest" description="Disordered" evidence="6">
    <location>
        <begin position="317"/>
        <end position="382"/>
    </location>
</feature>
<feature type="compositionally biased region" description="Polar residues" evidence="6">
    <location>
        <begin position="317"/>
        <end position="332"/>
    </location>
</feature>
<feature type="compositionally biased region" description="Low complexity" evidence="6">
    <location>
        <begin position="362"/>
        <end position="374"/>
    </location>
</feature>
<feature type="modified residue" description="Phosphoserine" evidence="1">
    <location>
        <position position="5"/>
    </location>
</feature>
<feature type="modified residue" description="Phosphotyrosine" evidence="3">
    <location>
        <position position="247"/>
    </location>
</feature>
<feature type="modified residue" description="Phosphoserine" evidence="2">
    <location>
        <position position="255"/>
    </location>
</feature>
<feature type="modified residue" description="Phosphoserine" evidence="2">
    <location>
        <position position="262"/>
    </location>
</feature>
<feature type="modified residue" description="S-nitrosocysteine" evidence="3">
    <location>
        <position position="271"/>
    </location>
</feature>
<feature type="modified residue" description="Phosphothreonine" evidence="3">
    <location>
        <position position="275"/>
    </location>
</feature>
<feature type="modified residue" description="Phosphoserine" evidence="3">
    <location>
        <position position="306"/>
    </location>
</feature>
<feature type="modified residue" description="Phosphoserine" evidence="2">
    <location>
        <position position="314"/>
    </location>
</feature>
<feature type="modified residue" description="Phosphoserine; by CK1" evidence="2">
    <location>
        <position position="325"/>
    </location>
</feature>
<feature type="modified residue" description="Phosphothreonine" evidence="3">
    <location>
        <position position="326"/>
    </location>
</feature>
<feature type="modified residue" description="Phosphoserine; by CK1" evidence="2">
    <location>
        <position position="328"/>
    </location>
</feature>
<feature type="modified residue" description="Phosphoserine; by CK1" evidence="2">
    <location>
        <position position="330"/>
    </location>
</feature>
<feature type="modified residue" description="Phosphoserine" evidence="2">
    <location>
        <position position="344"/>
    </location>
</feature>
<feature type="modified residue" description="Phosphoserine" evidence="3">
    <location>
        <position position="365"/>
    </location>
</feature>
<feature type="modified residue" description="Phosphoserine; by PKC/PRKCG and PKC/PRKCD" evidence="3">
    <location>
        <position position="368"/>
    </location>
</feature>
<feature type="modified residue" description="Phosphoserine" evidence="3">
    <location>
        <position position="369"/>
    </location>
</feature>
<feature type="modified residue" description="Phosphoserine" evidence="1">
    <location>
        <position position="373"/>
    </location>
</feature>
<feature type="disulfide bond" evidence="2">
    <location>
        <begin position="54"/>
        <end position="192"/>
    </location>
</feature>
<feature type="disulfide bond" evidence="2">
    <location>
        <begin position="187"/>
        <end position="198"/>
    </location>
</feature>
<feature type="cross-link" description="Glycyl lysine isopeptide (Lys-Gly) (interchain with G-Cter in SUMO)" evidence="2">
    <location>
        <position position="144"/>
    </location>
</feature>
<feature type="cross-link" description="Glycyl lysine isopeptide (Lys-Gly) (interchain with G-Cter in SUMO)" evidence="2">
    <location>
        <position position="237"/>
    </location>
</feature>
<evidence type="ECO:0000250" key="1">
    <source>
        <dbReference type="UniProtKB" id="P08050"/>
    </source>
</evidence>
<evidence type="ECO:0000250" key="2">
    <source>
        <dbReference type="UniProtKB" id="P17302"/>
    </source>
</evidence>
<evidence type="ECO:0000250" key="3">
    <source>
        <dbReference type="UniProtKB" id="P23242"/>
    </source>
</evidence>
<evidence type="ECO:0000250" key="4">
    <source>
        <dbReference type="UniProtKB" id="Q6TYA7"/>
    </source>
</evidence>
<evidence type="ECO:0000255" key="5"/>
<evidence type="ECO:0000256" key="6">
    <source>
        <dbReference type="SAM" id="MobiDB-lite"/>
    </source>
</evidence>
<evidence type="ECO:0000305" key="7"/>
<reference key="1">
    <citation type="journal article" date="2004" name="Dev. Genes Evol.">
        <title>Connexin43 orthologues in vertebrates: phylogeny from fish to man.</title>
        <authorList>
            <person name="van der Heyden M.A."/>
            <person name="van Eijk M."/>
            <person name="Wilders R."/>
            <person name="de Bakker J.M."/>
            <person name="Opthof T."/>
        </authorList>
    </citation>
    <scope>NUCLEOTIDE SEQUENCE [GENOMIC DNA]</scope>
</reference>
<proteinExistence type="evidence at protein level"/>
<dbReference type="EMBL" id="AY382588">
    <property type="protein sequence ID" value="AAR33082.1"/>
    <property type="molecule type" value="Genomic_DNA"/>
</dbReference>
<dbReference type="SMR" id="Q6TYA9"/>
<dbReference type="IntAct" id="Q6TYA9">
    <property type="interactions" value="1"/>
</dbReference>
<dbReference type="GO" id="GO:0016324">
    <property type="term" value="C:apical plasma membrane"/>
    <property type="evidence" value="ECO:0000250"/>
    <property type="project" value="UniProtKB"/>
</dbReference>
<dbReference type="GO" id="GO:0030054">
    <property type="term" value="C:cell junction"/>
    <property type="evidence" value="ECO:0000250"/>
    <property type="project" value="UniProtKB"/>
</dbReference>
<dbReference type="GO" id="GO:0005922">
    <property type="term" value="C:connexin complex"/>
    <property type="evidence" value="ECO:0000250"/>
    <property type="project" value="UniProtKB"/>
</dbReference>
<dbReference type="GO" id="GO:0005783">
    <property type="term" value="C:endoplasmic reticulum"/>
    <property type="evidence" value="ECO:0007669"/>
    <property type="project" value="UniProtKB-SubCell"/>
</dbReference>
<dbReference type="GO" id="GO:0014704">
    <property type="term" value="C:intercalated disc"/>
    <property type="evidence" value="ECO:0000250"/>
    <property type="project" value="UniProtKB"/>
</dbReference>
<dbReference type="GO" id="GO:0005739">
    <property type="term" value="C:mitochondrion"/>
    <property type="evidence" value="ECO:0000250"/>
    <property type="project" value="UniProtKB"/>
</dbReference>
<dbReference type="GO" id="GO:0005886">
    <property type="term" value="C:plasma membrane"/>
    <property type="evidence" value="ECO:0000250"/>
    <property type="project" value="UniProtKB"/>
</dbReference>
<dbReference type="GO" id="GO:0055077">
    <property type="term" value="F:gap junction hemi-channel activity"/>
    <property type="evidence" value="ECO:0000250"/>
    <property type="project" value="UniProtKB"/>
</dbReference>
<dbReference type="GO" id="GO:0015631">
    <property type="term" value="F:tubulin binding"/>
    <property type="evidence" value="ECO:0000250"/>
    <property type="project" value="UniProtKB"/>
</dbReference>
<dbReference type="GO" id="GO:0060348">
    <property type="term" value="P:bone development"/>
    <property type="evidence" value="ECO:0000250"/>
    <property type="project" value="UniProtKB"/>
</dbReference>
<dbReference type="GO" id="GO:0046849">
    <property type="term" value="P:bone remodeling"/>
    <property type="evidence" value="ECO:0000250"/>
    <property type="project" value="UniProtKB"/>
</dbReference>
<dbReference type="GO" id="GO:0010644">
    <property type="term" value="P:cell communication by electrical coupling"/>
    <property type="evidence" value="ECO:0007669"/>
    <property type="project" value="TreeGrafter"/>
</dbReference>
<dbReference type="GO" id="GO:0007267">
    <property type="term" value="P:cell-cell signaling"/>
    <property type="evidence" value="ECO:0007669"/>
    <property type="project" value="InterPro"/>
</dbReference>
<dbReference type="GO" id="GO:0007507">
    <property type="term" value="P:heart development"/>
    <property type="evidence" value="ECO:0007669"/>
    <property type="project" value="InterPro"/>
</dbReference>
<dbReference type="GO" id="GO:0099111">
    <property type="term" value="P:microtubule-based transport"/>
    <property type="evidence" value="ECO:0000250"/>
    <property type="project" value="UniProtKB"/>
</dbReference>
<dbReference type="GO" id="GO:0030308">
    <property type="term" value="P:negative regulation of cell growth"/>
    <property type="evidence" value="ECO:0000250"/>
    <property type="project" value="UniProtKB"/>
</dbReference>
<dbReference type="GO" id="GO:0042981">
    <property type="term" value="P:regulation of apoptotic process"/>
    <property type="evidence" value="ECO:0000250"/>
    <property type="project" value="UniProtKB"/>
</dbReference>
<dbReference type="GO" id="GO:0007283">
    <property type="term" value="P:spermatogenesis"/>
    <property type="evidence" value="ECO:0000250"/>
    <property type="project" value="UniProtKB"/>
</dbReference>
<dbReference type="FunFam" id="1.20.1440.80:FF:000001">
    <property type="entry name" value="Gap junction alpha-1"/>
    <property type="match status" value="1"/>
</dbReference>
<dbReference type="FunFam" id="1.20.5.1130:FF:000001">
    <property type="entry name" value="Gap junction alpha-1"/>
    <property type="match status" value="1"/>
</dbReference>
<dbReference type="Gene3D" id="1.20.5.1130">
    <property type="entry name" value="Connexin43"/>
    <property type="match status" value="1"/>
</dbReference>
<dbReference type="Gene3D" id="1.20.1440.80">
    <property type="entry name" value="Gap junction channel protein cysteine-rich domain"/>
    <property type="match status" value="1"/>
</dbReference>
<dbReference type="InterPro" id="IPR035091">
    <property type="entry name" value="Alpha_helix_dom_sf"/>
</dbReference>
<dbReference type="InterPro" id="IPR000500">
    <property type="entry name" value="Connexin"/>
</dbReference>
<dbReference type="InterPro" id="IPR002261">
    <property type="entry name" value="Connexin43"/>
</dbReference>
<dbReference type="InterPro" id="IPR013124">
    <property type="entry name" value="Connexin43_C"/>
</dbReference>
<dbReference type="InterPro" id="IPR034634">
    <property type="entry name" value="Connexin_C"/>
</dbReference>
<dbReference type="InterPro" id="IPR019570">
    <property type="entry name" value="Connexin_CCC"/>
</dbReference>
<dbReference type="InterPro" id="IPR017990">
    <property type="entry name" value="Connexin_CS"/>
</dbReference>
<dbReference type="InterPro" id="IPR013092">
    <property type="entry name" value="Connexin_N"/>
</dbReference>
<dbReference type="InterPro" id="IPR038359">
    <property type="entry name" value="Connexin_N_sf"/>
</dbReference>
<dbReference type="PANTHER" id="PTHR11984">
    <property type="entry name" value="CONNEXIN"/>
    <property type="match status" value="1"/>
</dbReference>
<dbReference type="PANTHER" id="PTHR11984:SF33">
    <property type="entry name" value="GAP JUNCTION ALPHA-1 PROTEIN"/>
    <property type="match status" value="1"/>
</dbReference>
<dbReference type="Pfam" id="PF00029">
    <property type="entry name" value="Connexin"/>
    <property type="match status" value="1"/>
</dbReference>
<dbReference type="Pfam" id="PF03508">
    <property type="entry name" value="Connexin43"/>
    <property type="match status" value="1"/>
</dbReference>
<dbReference type="PRINTS" id="PR00206">
    <property type="entry name" value="CONNEXIN"/>
</dbReference>
<dbReference type="PRINTS" id="PR01132">
    <property type="entry name" value="CONNEXINA1"/>
</dbReference>
<dbReference type="SMART" id="SM00037">
    <property type="entry name" value="CNX"/>
    <property type="match status" value="1"/>
</dbReference>
<dbReference type="SMART" id="SM01089">
    <property type="entry name" value="Connexin_CCC"/>
    <property type="match status" value="1"/>
</dbReference>
<dbReference type="SUPFAM" id="SSF118220">
    <property type="entry name" value="Connexin43"/>
    <property type="match status" value="1"/>
</dbReference>
<dbReference type="PROSITE" id="PS00407">
    <property type="entry name" value="CONNEXINS_1"/>
    <property type="match status" value="1"/>
</dbReference>
<dbReference type="PROSITE" id="PS00408">
    <property type="entry name" value="CONNEXINS_2"/>
    <property type="match status" value="1"/>
</dbReference>
<keyword id="KW-0007">Acetylation</keyword>
<keyword id="KW-0965">Cell junction</keyword>
<keyword id="KW-1003">Cell membrane</keyword>
<keyword id="KW-1015">Disulfide bond</keyword>
<keyword id="KW-0256">Endoplasmic reticulum</keyword>
<keyword id="KW-0303">Gap junction</keyword>
<keyword id="KW-1017">Isopeptide bond</keyword>
<keyword id="KW-0472">Membrane</keyword>
<keyword id="KW-0597">Phosphoprotein</keyword>
<keyword id="KW-0702">S-nitrosylation</keyword>
<keyword id="KW-0812">Transmembrane</keyword>
<keyword id="KW-1133">Transmembrane helix</keyword>
<keyword id="KW-0832">Ubl conjugation</keyword>
<comment type="function">
    <text evidence="1 3">Gap junction protein that acts as a regulator of bladder capacity. A gap junction consists of a cluster of closely packed pairs of transmembrane channels, the connexons, through which materials of low MW diffuse from one cell to a neighboring cell. May play a critical role in the physiology of hearing by participating in the recycling of potassium to the cochlear endolymph. Negative regulator of bladder functional capacity: acts by enhancing intercellular electrical and chemical transmission, thus sensitizing bladder muscles to cholinergic neural stimuli and causing them to contract. May play a role in cell growth inhibition through the regulation of NOV expression and localization. Plays an essential role in gap junction communication in the ventricles (By similarity).</text>
</comment>
<comment type="subunit">
    <text evidence="1 2 3">A connexon is composed of a hexamer of connexins. Interacts with SGSM3 (By similarity). Interacts with RIC1/CIP150 (By similarity). Interacts with CNST and CSNK1D (By similarity). Interacts (via C-terminus) with TJP1. Interacts (via C-terminus) with SRC (via SH3 domain). Interacts (not ubiquitinated) with UBQLN4 (via UBA domain) (By similarity). Interacts with NOV. Interacts with TMEM65 (By similarity). Interacts with ANK3/ANKG and PKP2 (By similarity).</text>
</comment>
<comment type="interaction">
    <interactant intactId="EBI-6901331">
        <id>Q6TYA9</id>
    </interactant>
    <interactant intactId="EBI-6900677">
        <id>Q02487-1</id>
        <label>DSC2</label>
    </interactant>
    <organismsDiffer>true</organismsDiffer>
    <experiments>3</experiments>
</comment>
<comment type="subcellular location">
    <subcellularLocation>
        <location evidence="2">Cell membrane</location>
        <topology evidence="5">Multi-pass membrane protein</topology>
    </subcellularLocation>
    <subcellularLocation>
        <location evidence="2">Cell junction</location>
        <location evidence="2">Gap junction</location>
    </subcellularLocation>
    <subcellularLocation>
        <location evidence="3">Endoplasmic reticulum</location>
    </subcellularLocation>
    <text evidence="3">Localizes at the intercalated disk (ICD) in cardiomyocytes and the proper localization at ICD is dependent on TMEM65.</text>
</comment>
<comment type="PTM">
    <text evidence="1 2 4">Phosphorylation at Ser-325, Ser-328 and Ser-330 by CK1 modulates gap junction assembly. Phosphorylated at Ser-368 by PRKCG; phosphorylation induces disassembly of gap junction plaques and inhibition of gap junction activity. Phosphorylation at Ser-368 by PRKCD triggers its internalization into small vesicles leading to proteasome-mediated degradation (By similarity).</text>
</comment>
<comment type="PTM">
    <text evidence="2">Sumoylated with SUMO1, SUMO2 and SUMO3, which may regulate the level of functional Cx43 gap junctions at the plasma membrane. May be desumoylated by SENP1 or SENP2 (By similarity).</text>
</comment>
<comment type="PTM">
    <text evidence="3">S-nitrosylation at Cys-271 is enriched at the muscle endothelial gap junction in arteries, it augments channel permeability and may regulate of smooth muscle cell to endothelial cell communication.</text>
</comment>
<comment type="PTM">
    <text evidence="3">Acetylated in the developing cortex; leading to delocalization from the cell membrane.</text>
</comment>
<comment type="similarity">
    <text evidence="7">Belongs to the connexin family. Alpha-type (group II) subfamily.</text>
</comment>
<accession>Q6TYA9</accession>
<gene>
    <name type="primary">GJA1</name>
</gene>
<organism>
    <name type="scientific">Chlorocebus aethiops</name>
    <name type="common">Green monkey</name>
    <name type="synonym">Cercopithecus aethiops</name>
    <dbReference type="NCBI Taxonomy" id="9534"/>
    <lineage>
        <taxon>Eukaryota</taxon>
        <taxon>Metazoa</taxon>
        <taxon>Chordata</taxon>
        <taxon>Craniata</taxon>
        <taxon>Vertebrata</taxon>
        <taxon>Euteleostomi</taxon>
        <taxon>Mammalia</taxon>
        <taxon>Eutheria</taxon>
        <taxon>Euarchontoglires</taxon>
        <taxon>Primates</taxon>
        <taxon>Haplorrhini</taxon>
        <taxon>Catarrhini</taxon>
        <taxon>Cercopithecidae</taxon>
        <taxon>Cercopithecinae</taxon>
        <taxon>Chlorocebus</taxon>
    </lineage>
</organism>
<sequence>MGDWSALGKLLDKVQAYSTAGGKVWLSVLFIFRILLLGTAVESAWGDEQSAFRCNTQQPGCENVCYDKSFPISHVRFWVLQIIFVSVPTLLYLAHVFYVMRKEEKLNKKEEELKVAQTDGVNVEMHLKQIEIKKFKYGIEEHGKVKMRGGLLRTYIISILFKSIFEVAFLLIQWYIYGFSLSAVYTCKRDPCPHQVDCFLSRPTEKTIFIIFMLVVSLVSLALNIIELFYVFFKGVKDRVKGKSDPYHTTSGALSPTKDCGSQKYAYFNGCSSPTAPLSPMSPPGYKLVTGDRNNSSCRNYNKQASEQNWANYSAEQNRMGQAGSTISNSHAQPFDFPDDNQNSKKLAAGHELQPLAIVDQRPSSRASSRASSRPRPDDLEI</sequence>
<name>CXA1_CHLAE</name>